<name>CHIA_PHAAN</name>
<reference key="1">
    <citation type="journal article" date="1993" name="Plant Cell Physiol.">
        <title>Cloning of a complementary DNA that encodes an acidic chitinase which is induced by ethylene and expression of the corresponding gene.</title>
        <authorList>
            <person name="Ishige F."/>
            <person name="Mori H."/>
            <person name="Yamazaki K."/>
            <person name="Imaseki H."/>
        </authorList>
    </citation>
    <scope>NUCLEOTIDE SEQUENCE [MRNA]</scope>
</reference>
<dbReference type="EC" id="3.2.1.14"/>
<dbReference type="EMBL" id="D11335">
    <property type="protein sequence ID" value="BAA01948.1"/>
    <property type="status" value="ALT_INIT"/>
    <property type="molecule type" value="mRNA"/>
</dbReference>
<dbReference type="PIR" id="S36932">
    <property type="entry name" value="S36932"/>
</dbReference>
<dbReference type="RefSeq" id="NP_001316758.1">
    <property type="nucleotide sequence ID" value="NM_001329829.1"/>
</dbReference>
<dbReference type="SMR" id="P29024"/>
<dbReference type="CAZy" id="GH18">
    <property type="family name" value="Glycoside Hydrolase Family 18"/>
</dbReference>
<dbReference type="GeneID" id="108339599"/>
<dbReference type="KEGG" id="var:108339599"/>
<dbReference type="OrthoDB" id="6020543at2759"/>
<dbReference type="GO" id="GO:0005576">
    <property type="term" value="C:extracellular region"/>
    <property type="evidence" value="ECO:0007669"/>
    <property type="project" value="UniProtKB-SubCell"/>
</dbReference>
<dbReference type="GO" id="GO:0008843">
    <property type="term" value="F:endochitinase activity"/>
    <property type="evidence" value="ECO:0007669"/>
    <property type="project" value="UniProtKB-EC"/>
</dbReference>
<dbReference type="GO" id="GO:0006032">
    <property type="term" value="P:chitin catabolic process"/>
    <property type="evidence" value="ECO:0007669"/>
    <property type="project" value="UniProtKB-KW"/>
</dbReference>
<dbReference type="GO" id="GO:0000272">
    <property type="term" value="P:polysaccharide catabolic process"/>
    <property type="evidence" value="ECO:0007669"/>
    <property type="project" value="UniProtKB-KW"/>
</dbReference>
<dbReference type="CDD" id="cd02877">
    <property type="entry name" value="GH18_hevamine_XipI_class_III"/>
    <property type="match status" value="1"/>
</dbReference>
<dbReference type="FunFam" id="3.20.20.80:FF:000015">
    <property type="entry name" value="Acidic endochitinase SE2"/>
    <property type="match status" value="1"/>
</dbReference>
<dbReference type="Gene3D" id="3.20.20.80">
    <property type="entry name" value="Glycosidases"/>
    <property type="match status" value="1"/>
</dbReference>
<dbReference type="InterPro" id="IPR045321">
    <property type="entry name" value="Cts1-like"/>
</dbReference>
<dbReference type="InterPro" id="IPR001223">
    <property type="entry name" value="Glyco_hydro18_cat"/>
</dbReference>
<dbReference type="InterPro" id="IPR001579">
    <property type="entry name" value="Glyco_hydro_18_chit_AS"/>
</dbReference>
<dbReference type="InterPro" id="IPR017853">
    <property type="entry name" value="Glycoside_hydrolase_SF"/>
</dbReference>
<dbReference type="InterPro" id="IPR050542">
    <property type="entry name" value="Glycosyl_Hydrlase18_Chitinase"/>
</dbReference>
<dbReference type="PANTHER" id="PTHR45708:SF22">
    <property type="entry name" value="ACIDIC ENDOCHITINASE"/>
    <property type="match status" value="1"/>
</dbReference>
<dbReference type="PANTHER" id="PTHR45708">
    <property type="entry name" value="ENDOCHITINASE"/>
    <property type="match status" value="1"/>
</dbReference>
<dbReference type="Pfam" id="PF00704">
    <property type="entry name" value="Glyco_hydro_18"/>
    <property type="match status" value="1"/>
</dbReference>
<dbReference type="SUPFAM" id="SSF51445">
    <property type="entry name" value="(Trans)glycosidases"/>
    <property type="match status" value="1"/>
</dbReference>
<dbReference type="PROSITE" id="PS01095">
    <property type="entry name" value="GH18_1"/>
    <property type="match status" value="1"/>
</dbReference>
<dbReference type="PROSITE" id="PS51910">
    <property type="entry name" value="GH18_2"/>
    <property type="match status" value="1"/>
</dbReference>
<feature type="signal peptide" evidence="2">
    <location>
        <begin position="1"/>
        <end position="29"/>
    </location>
</feature>
<feature type="chain" id="PRO_0000011917" description="Acidic endochitinase">
    <location>
        <begin position="30"/>
        <end position="298"/>
    </location>
</feature>
<feature type="domain" description="GH18" evidence="3">
    <location>
        <begin position="30"/>
        <end position="298"/>
    </location>
</feature>
<feature type="active site" description="Proton donor" evidence="3">
    <location>
        <position position="156"/>
    </location>
</feature>
<feature type="disulfide bond" evidence="1">
    <location>
        <begin position="49"/>
        <end position="96"/>
    </location>
</feature>
<feature type="disulfide bond" evidence="1">
    <location>
        <begin position="79"/>
        <end position="86"/>
    </location>
</feature>
<feature type="disulfide bond" evidence="1">
    <location>
        <begin position="185"/>
        <end position="214"/>
    </location>
</feature>
<evidence type="ECO:0000250" key="1"/>
<evidence type="ECO:0000255" key="2"/>
<evidence type="ECO:0000255" key="3">
    <source>
        <dbReference type="PROSITE-ProRule" id="PRU01258"/>
    </source>
</evidence>
<evidence type="ECO:0000305" key="4"/>
<sequence>MKPNMACLKQVSALLLPLLFISFFKPSHAGGISVYWGQNGNEGSLADACNTGNYKYVNIAFLFTFGGGQTPQLNLAGHCNPSINNCNVFSDQIKECQSKDIKVLLSLGGASGSYSLTSADDATQVANYIWNNFLGGQSSSRPLGDAILDGVDFDIESGTGEHWDDLARALKGFNSQLLLTAAPQCPIPDAHLDTAIKTGLFDIVWVQFYNNPPCQYSSGNTNDLISSWNQWTSSQAKQLFLGVPASTAAAGSGFIPADVLTSQVLPTIKGSSKYGGVMLWDRFNDGQSGYSGAIIGSV</sequence>
<keyword id="KW-0119">Carbohydrate metabolism</keyword>
<keyword id="KW-0146">Chitin degradation</keyword>
<keyword id="KW-1015">Disulfide bond</keyword>
<keyword id="KW-0326">Glycosidase</keyword>
<keyword id="KW-0378">Hydrolase</keyword>
<keyword id="KW-0624">Polysaccharide degradation</keyword>
<keyword id="KW-0964">Secreted</keyword>
<keyword id="KW-0732">Signal</keyword>
<comment type="function">
    <text>This protein functions as a defense against chitin containing fungal pathogens.</text>
</comment>
<comment type="catalytic activity">
    <reaction>
        <text>Random endo-hydrolysis of N-acetyl-beta-D-glucosaminide (1-&gt;4)-beta-linkages in chitin and chitodextrins.</text>
        <dbReference type="EC" id="3.2.1.14"/>
    </reaction>
</comment>
<comment type="subcellular location">
    <subcellularLocation>
        <location>Secreted</location>
        <location>Extracellular space</location>
    </subcellularLocation>
</comment>
<comment type="induction">
    <text>By ethylene.</text>
</comment>
<comment type="similarity">
    <text evidence="4">Belongs to the glycosyl hydrolase 18 family. Chitinase class II subfamily.</text>
</comment>
<comment type="sequence caution" evidence="4">
    <conflict type="erroneous initiation">
        <sequence resource="EMBL-CDS" id="BAA01948"/>
    </conflict>
</comment>
<organism>
    <name type="scientific">Phaseolus angularis</name>
    <name type="common">Azuki bean</name>
    <name type="synonym">Vigna angularis</name>
    <dbReference type="NCBI Taxonomy" id="3914"/>
    <lineage>
        <taxon>Eukaryota</taxon>
        <taxon>Viridiplantae</taxon>
        <taxon>Streptophyta</taxon>
        <taxon>Embryophyta</taxon>
        <taxon>Tracheophyta</taxon>
        <taxon>Spermatophyta</taxon>
        <taxon>Magnoliopsida</taxon>
        <taxon>eudicotyledons</taxon>
        <taxon>Gunneridae</taxon>
        <taxon>Pentapetalae</taxon>
        <taxon>rosids</taxon>
        <taxon>fabids</taxon>
        <taxon>Fabales</taxon>
        <taxon>Fabaceae</taxon>
        <taxon>Papilionoideae</taxon>
        <taxon>50 kb inversion clade</taxon>
        <taxon>NPAAA clade</taxon>
        <taxon>indigoferoid/millettioid clade</taxon>
        <taxon>Phaseoleae</taxon>
        <taxon>Vigna</taxon>
    </lineage>
</organism>
<proteinExistence type="evidence at transcript level"/>
<protein>
    <recommendedName>
        <fullName>Acidic endochitinase</fullName>
        <ecNumber>3.2.1.14</ecNumber>
    </recommendedName>
</protein>
<accession>P29024</accession>